<comment type="function">
    <text evidence="1">Together with the chaperonin GroEL, plays an essential role in assisting protein folding. The GroEL-GroES system forms a nano-cage that allows encapsulation of the non-native substrate proteins and provides a physical environment optimized to promote and accelerate protein folding. GroES binds to the apical surface of the GroEL ring, thereby capping the opening of the GroEL channel.</text>
</comment>
<comment type="subunit">
    <text evidence="1">Heptamer of 7 subunits arranged in a ring. Interacts with the chaperonin GroEL.</text>
</comment>
<comment type="subcellular location">
    <subcellularLocation>
        <location evidence="1">Cytoplasm</location>
    </subcellularLocation>
</comment>
<comment type="similarity">
    <text evidence="1">Belongs to the GroES chaperonin family.</text>
</comment>
<organism>
    <name type="scientific">Streptococcus agalactiae</name>
    <dbReference type="NCBI Taxonomy" id="1311"/>
    <lineage>
        <taxon>Bacteria</taxon>
        <taxon>Bacillati</taxon>
        <taxon>Bacillota</taxon>
        <taxon>Bacilli</taxon>
        <taxon>Lactobacillales</taxon>
        <taxon>Streptococcaceae</taxon>
        <taxon>Streptococcus</taxon>
    </lineage>
</organism>
<protein>
    <recommendedName>
        <fullName evidence="1">Co-chaperonin GroES</fullName>
    </recommendedName>
    <alternativeName>
        <fullName evidence="1">10 kDa chaperonin</fullName>
    </alternativeName>
    <alternativeName>
        <fullName evidence="1">Chaperonin-10</fullName>
        <shortName evidence="1">Cpn10</shortName>
    </alternativeName>
</protein>
<accession>Q9AME8</accession>
<sequence length="94" mass="9733">MLKPLGDRVIISFVETEEKSVGGFVLAGASHDATKTAKVLAVGDGIRTLTGELVAPSVAEGDTVLVENDAGLEVKDGNEKVTVVRESDIVAVVK</sequence>
<evidence type="ECO:0000255" key="1">
    <source>
        <dbReference type="HAMAP-Rule" id="MF_00580"/>
    </source>
</evidence>
<name>CH10_STRAG</name>
<dbReference type="EMBL" id="AF325221">
    <property type="protein sequence ID" value="AAK12937.1"/>
    <property type="molecule type" value="Genomic_DNA"/>
</dbReference>
<dbReference type="SMR" id="Q9AME8"/>
<dbReference type="GO" id="GO:0005737">
    <property type="term" value="C:cytoplasm"/>
    <property type="evidence" value="ECO:0007669"/>
    <property type="project" value="UniProtKB-SubCell"/>
</dbReference>
<dbReference type="GO" id="GO:0005524">
    <property type="term" value="F:ATP binding"/>
    <property type="evidence" value="ECO:0007669"/>
    <property type="project" value="InterPro"/>
</dbReference>
<dbReference type="GO" id="GO:0046872">
    <property type="term" value="F:metal ion binding"/>
    <property type="evidence" value="ECO:0007669"/>
    <property type="project" value="TreeGrafter"/>
</dbReference>
<dbReference type="GO" id="GO:0044183">
    <property type="term" value="F:protein folding chaperone"/>
    <property type="evidence" value="ECO:0007669"/>
    <property type="project" value="InterPro"/>
</dbReference>
<dbReference type="GO" id="GO:0051087">
    <property type="term" value="F:protein-folding chaperone binding"/>
    <property type="evidence" value="ECO:0007669"/>
    <property type="project" value="TreeGrafter"/>
</dbReference>
<dbReference type="GO" id="GO:0051082">
    <property type="term" value="F:unfolded protein binding"/>
    <property type="evidence" value="ECO:0007669"/>
    <property type="project" value="TreeGrafter"/>
</dbReference>
<dbReference type="GO" id="GO:0051085">
    <property type="term" value="P:chaperone cofactor-dependent protein refolding"/>
    <property type="evidence" value="ECO:0007669"/>
    <property type="project" value="TreeGrafter"/>
</dbReference>
<dbReference type="CDD" id="cd00320">
    <property type="entry name" value="cpn10"/>
    <property type="match status" value="1"/>
</dbReference>
<dbReference type="FunFam" id="2.30.33.40:FF:000001">
    <property type="entry name" value="10 kDa chaperonin"/>
    <property type="match status" value="1"/>
</dbReference>
<dbReference type="Gene3D" id="2.30.33.40">
    <property type="entry name" value="GroES chaperonin"/>
    <property type="match status" value="1"/>
</dbReference>
<dbReference type="HAMAP" id="MF_00580">
    <property type="entry name" value="CH10"/>
    <property type="match status" value="1"/>
</dbReference>
<dbReference type="InterPro" id="IPR020818">
    <property type="entry name" value="Chaperonin_GroES"/>
</dbReference>
<dbReference type="InterPro" id="IPR037124">
    <property type="entry name" value="Chaperonin_GroES_sf"/>
</dbReference>
<dbReference type="InterPro" id="IPR018369">
    <property type="entry name" value="Chaprnonin_Cpn10_CS"/>
</dbReference>
<dbReference type="InterPro" id="IPR011032">
    <property type="entry name" value="GroES-like_sf"/>
</dbReference>
<dbReference type="NCBIfam" id="NF001528">
    <property type="entry name" value="PRK00364.1-4"/>
    <property type="match status" value="1"/>
</dbReference>
<dbReference type="PANTHER" id="PTHR10772">
    <property type="entry name" value="10 KDA HEAT SHOCK PROTEIN"/>
    <property type="match status" value="1"/>
</dbReference>
<dbReference type="PANTHER" id="PTHR10772:SF58">
    <property type="entry name" value="CO-CHAPERONIN GROES"/>
    <property type="match status" value="1"/>
</dbReference>
<dbReference type="Pfam" id="PF00166">
    <property type="entry name" value="Cpn10"/>
    <property type="match status" value="1"/>
</dbReference>
<dbReference type="PRINTS" id="PR00297">
    <property type="entry name" value="CHAPERONIN10"/>
</dbReference>
<dbReference type="SMART" id="SM00883">
    <property type="entry name" value="Cpn10"/>
    <property type="match status" value="1"/>
</dbReference>
<dbReference type="SUPFAM" id="SSF50129">
    <property type="entry name" value="GroES-like"/>
    <property type="match status" value="1"/>
</dbReference>
<dbReference type="PROSITE" id="PS00681">
    <property type="entry name" value="CHAPERONINS_CPN10"/>
    <property type="match status" value="1"/>
</dbReference>
<reference key="1">
    <citation type="submission" date="2000-11" db="EMBL/GenBank/DDBJ databases">
        <title>Cloning, sequencing, and characterization of 10 kDa chaperonin gene from Streptococcus agalactiae.</title>
        <authorList>
            <person name="Jwo-Farn C."/>
        </authorList>
    </citation>
    <scope>NUCLEOTIDE SEQUENCE [GENOMIC DNA]</scope>
</reference>
<gene>
    <name evidence="1" type="primary">groES</name>
    <name evidence="1" type="synonym">groS</name>
</gene>
<feature type="chain" id="PRO_0000174851" description="Co-chaperonin GroES">
    <location>
        <begin position="1"/>
        <end position="94"/>
    </location>
</feature>
<keyword id="KW-0143">Chaperone</keyword>
<keyword id="KW-0963">Cytoplasm</keyword>
<proteinExistence type="inferred from homology"/>